<comment type="function">
    <text evidence="1">Multifunctional enzyme involved in mRNA capping. Catalyzes the formation of the 5' cap structure on the viral plus-strand transcripts. Specifically binds to GTP and displays guanylyltransferase and methyltransferase activities. Has affinity for ssRNA but not for dsRNA. Capping activity is non-specific and caps RNAs that initiate with either a G or an A residue. Together with VP1 polymerase, forms a VP1-VP3 complex positioned near the channels situated at each of the five-fold vertices of the core. Following infection, the outermost layer of the virus is lost, leaving a double-layered particle (DLP) made up of the core and VP6 shell. VP1 then catalyzes the transcription of fully conservative plus-strand genomic RNAs that are capped by VP3 and extruded through the DLP's channels into the cytoplasm where they function as mRNAs for translation of viral proteins. DLPs probably have an RNA triphosphatase activity as well, whereas open cores do not.</text>
</comment>
<comment type="function">
    <text evidence="1">Counteracts the host innate immune response thanks to its phosphodiesterase that degrades the 5'-triphosphorylated, 2'-5' linked adenylate oligomers produced by the host cell IFN-inducible 2',5'-oligoadenylate synthetase (OAS). The host RNaseL is therefore not activated.</text>
</comment>
<comment type="catalytic activity">
    <reaction evidence="1">
        <text>a 5'-end diphospho-ribonucleoside in mRNA + GTP + H(+) = a 5'-end (5'-triphosphoguanosine)-ribonucleoside in mRNA + diphosphate</text>
        <dbReference type="Rhea" id="RHEA:67012"/>
        <dbReference type="Rhea" id="RHEA-COMP:17165"/>
        <dbReference type="Rhea" id="RHEA-COMP:17166"/>
        <dbReference type="ChEBI" id="CHEBI:15378"/>
        <dbReference type="ChEBI" id="CHEBI:33019"/>
        <dbReference type="ChEBI" id="CHEBI:37565"/>
        <dbReference type="ChEBI" id="CHEBI:167616"/>
        <dbReference type="ChEBI" id="CHEBI:167617"/>
        <dbReference type="EC" id="2.7.7.50"/>
    </reaction>
</comment>
<comment type="catalytic activity">
    <reaction evidence="1">
        <text>a 5'-end (5'-triphosphoguanosine)-ribonucleoside in mRNA + S-adenosyl-L-methionine = a 5'-end (N(7)-methyl 5'-triphosphoguanosine)-ribonucleoside in mRNA + S-adenosyl-L-homocysteine</text>
        <dbReference type="Rhea" id="RHEA:67008"/>
        <dbReference type="Rhea" id="RHEA-COMP:17166"/>
        <dbReference type="Rhea" id="RHEA-COMP:17167"/>
        <dbReference type="ChEBI" id="CHEBI:57856"/>
        <dbReference type="ChEBI" id="CHEBI:59789"/>
        <dbReference type="ChEBI" id="CHEBI:156461"/>
        <dbReference type="ChEBI" id="CHEBI:167617"/>
        <dbReference type="EC" id="2.1.1.56"/>
    </reaction>
</comment>
<comment type="catalytic activity">
    <reaction evidence="1">
        <text>5'-triphosphoadenylyl-(2'-&gt;5')-adenylyl-(2'-&gt;5')-adenosine + 2 H2O = 2 AMP + ATP + 2 H(+)</text>
        <dbReference type="Rhea" id="RHEA:45964"/>
        <dbReference type="ChEBI" id="CHEBI:15377"/>
        <dbReference type="ChEBI" id="CHEBI:15378"/>
        <dbReference type="ChEBI" id="CHEBI:30616"/>
        <dbReference type="ChEBI" id="CHEBI:67143"/>
        <dbReference type="ChEBI" id="CHEBI:456215"/>
    </reaction>
</comment>
<comment type="subunit">
    <text evidence="1">Interacts with VP1. Interacts with VP2.</text>
</comment>
<comment type="subcellular location">
    <subcellularLocation>
        <location evidence="1">Virion</location>
    </subcellularLocation>
    <text evidence="1">Attached inside the inner capsid as a minor component. There are about 11 to 12 copies per virion.</text>
</comment>
<comment type="domain">
    <text evidence="1">Contains a bipartite N7-methyltransferase domain, a 2'-O-methyltransferase domain and a GTase/RTPase domain. The C-terminus contains a phosphodiesterase domain that degrades the 5'-triphosphorylated, 2'-5' linked adenylate oligomers produced by the host cell in response to IFN stimulation.</text>
</comment>
<comment type="similarity">
    <text evidence="1">Belongs to the rotavirus VP3 family.</text>
</comment>
<protein>
    <recommendedName>
        <fullName evidence="1">Protein VP3</fullName>
    </recommendedName>
    <domain>
        <recommendedName>
            <fullName evidence="1">2',5'-phosphodiesterase</fullName>
            <ecNumber evidence="1">3.1.4.-</ecNumber>
        </recommendedName>
    </domain>
    <domain>
        <recommendedName>
            <fullName evidence="1">mRNA guanylyltransferase</fullName>
            <ecNumber evidence="1">2.7.7.50</ecNumber>
        </recommendedName>
    </domain>
    <domain>
        <recommendedName>
            <fullName evidence="1">mRNA (guanine-N(7))-methyltransferase</fullName>
            <ecNumber evidence="1">2.1.1.56</ecNumber>
        </recommendedName>
    </domain>
</protein>
<evidence type="ECO:0000255" key="1">
    <source>
        <dbReference type="HAMAP-Rule" id="MF_04128"/>
    </source>
</evidence>
<organism>
    <name type="scientific">Rotavirus A (strain RVA/Human/Japan/S2/1980/G2P1B[4])</name>
    <name type="common">RV-A</name>
    <dbReference type="NCBI Taxonomy" id="10959"/>
    <lineage>
        <taxon>Viruses</taxon>
        <taxon>Riboviria</taxon>
        <taxon>Orthornavirae</taxon>
        <taxon>Duplornaviricota</taxon>
        <taxon>Resentoviricetes</taxon>
        <taxon>Reovirales</taxon>
        <taxon>Sedoreoviridae</taxon>
        <taxon>Rotavirus</taxon>
        <taxon>Rotavirus A</taxon>
    </lineage>
</organism>
<organismHost>
    <name type="scientific">Homo sapiens</name>
    <name type="common">Human</name>
    <dbReference type="NCBI Taxonomy" id="9606"/>
</organismHost>
<feature type="chain" id="PRO_0000368080" description="Protein VP3">
    <location>
        <begin position="1"/>
        <end position="835"/>
    </location>
</feature>
<feature type="region of interest" description="N7-methyltransferase activity" evidence="1">
    <location>
        <begin position="171"/>
        <end position="245"/>
    </location>
</feature>
<feature type="region of interest" description="2'-O-methyltransferase activity" evidence="1">
    <location>
        <begin position="246"/>
        <end position="428"/>
    </location>
</feature>
<feature type="region of interest" description="N7-methyltransferase activity" evidence="1">
    <location>
        <begin position="429"/>
        <end position="555"/>
    </location>
</feature>
<feature type="region of interest" description="GTase/RTPase activity" evidence="1">
    <location>
        <begin position="556"/>
        <end position="692"/>
    </location>
</feature>
<feature type="region of interest" description="2'-5'-phosphodiesterase activity" evidence="1">
    <location>
        <begin position="693"/>
        <end position="835"/>
    </location>
</feature>
<feature type="active site" description="For 2'-5'-phosphodiesterase activity" evidence="1">
    <location>
        <position position="718"/>
    </location>
</feature>
<feature type="active site" description="For 2'-5'-phosphodiesterase activity" evidence="1">
    <location>
        <position position="720"/>
    </location>
</feature>
<feature type="active site" description="For 2'-5'-phosphodiesterase activity" evidence="1">
    <location>
        <position position="797"/>
    </location>
</feature>
<feature type="active site" description="For 2'-5'-phosphodiesterase activity" evidence="1">
    <location>
        <position position="799"/>
    </location>
</feature>
<dbReference type="EC" id="3.1.4.-" evidence="1"/>
<dbReference type="EC" id="2.7.7.50" evidence="1"/>
<dbReference type="EC" id="2.1.1.56" evidence="1"/>
<dbReference type="EMBL" id="DQ870487">
    <property type="protein sequence ID" value="ABI60846.1"/>
    <property type="molecule type" value="Genomic_RNA"/>
</dbReference>
<dbReference type="EMBL" id="DQ490187">
    <property type="protein sequence ID" value="ABF57039.1"/>
    <property type="molecule type" value="Genomic_RNA"/>
</dbReference>
<dbReference type="SMR" id="A7J392"/>
<dbReference type="GO" id="GO:0019013">
    <property type="term" value="C:viral nucleocapsid"/>
    <property type="evidence" value="ECO:0007669"/>
    <property type="project" value="UniProtKB-UniRule"/>
</dbReference>
<dbReference type="GO" id="GO:0005525">
    <property type="term" value="F:GTP binding"/>
    <property type="evidence" value="ECO:0007669"/>
    <property type="project" value="UniProtKB-UniRule"/>
</dbReference>
<dbReference type="GO" id="GO:0016787">
    <property type="term" value="F:hydrolase activity"/>
    <property type="evidence" value="ECO:0007669"/>
    <property type="project" value="UniProtKB-KW"/>
</dbReference>
<dbReference type="GO" id="GO:0004482">
    <property type="term" value="F:mRNA 5'-cap (guanine-N7-)-methyltransferase activity"/>
    <property type="evidence" value="ECO:0007669"/>
    <property type="project" value="UniProtKB-UniRule"/>
</dbReference>
<dbReference type="GO" id="GO:0004484">
    <property type="term" value="F:mRNA guanylyltransferase activity"/>
    <property type="evidence" value="ECO:0007669"/>
    <property type="project" value="UniProtKB-UniRule"/>
</dbReference>
<dbReference type="GO" id="GO:0003723">
    <property type="term" value="F:RNA binding"/>
    <property type="evidence" value="ECO:0007669"/>
    <property type="project" value="UniProtKB-UniRule"/>
</dbReference>
<dbReference type="GO" id="GO:0052170">
    <property type="term" value="P:symbiont-mediated suppression of host innate immune response"/>
    <property type="evidence" value="ECO:0007669"/>
    <property type="project" value="UniProtKB-KW"/>
</dbReference>
<dbReference type="GO" id="GO:0016032">
    <property type="term" value="P:viral process"/>
    <property type="evidence" value="ECO:0007669"/>
    <property type="project" value="UniProtKB-UniRule"/>
</dbReference>
<dbReference type="CDD" id="cd20757">
    <property type="entry name" value="capping_2-OMTase_Rotavirus"/>
    <property type="match status" value="1"/>
</dbReference>
<dbReference type="HAMAP" id="MF_04124">
    <property type="entry name" value="Rota_VP3"/>
    <property type="match status" value="1"/>
</dbReference>
<dbReference type="HAMAP" id="MF_04128">
    <property type="entry name" value="Rota_VP3_A"/>
    <property type="match status" value="1"/>
</dbReference>
<dbReference type="InterPro" id="IPR011181">
    <property type="entry name" value="VP3_Rotav"/>
</dbReference>
<dbReference type="Pfam" id="PF06929">
    <property type="entry name" value="Rotavirus_VP3"/>
    <property type="match status" value="1"/>
</dbReference>
<dbReference type="PIRSF" id="PIRSF004015">
    <property type="entry name" value="LigT_rotavirus"/>
    <property type="match status" value="1"/>
</dbReference>
<dbReference type="PROSITE" id="PS51589">
    <property type="entry name" value="SAM_MT56_VP3"/>
    <property type="match status" value="1"/>
</dbReference>
<sequence length="835" mass="97996">MKVLALRHSVAQVYADTQVYTHDDSKDEYENAFLISNLTTHNILYLNYSVKTLQILNKSGIAAIEIQKMDELFTLIRCNFTYDYIDDVVYLHDYSYYTNNEIRTDQHWITKTNIEDYLLPGWKLTYVGYNGSDTRGHYNFSFRCQNAATDDDAIIEYIYSDELDFQSFILKKIKERMTTSLPIARLSNRVFRDKLFKTLSVNHDKVVNIGPRNESMFTFLDHPSIKQFSNGPYLVKDTIKLKQERWLGKRLSQFDIGQYKNMLNVLTTLYQYYDIYHEKPIVYMIGSAPSYWIYDVKQYSDLKFETWDPLDTPYSNLHHKELFYINDVQRLKDNSILYIDIRTDRGTMDWKEWRKMVERQTTDNLHIAYKYLSTGKAKICCVKMTAMDLELPISAKLLHHPTTEIRSEFYLMMDIWDSKNIKRFIPKGVLYSYINNTITENVFIQQPFKLKTLKNEYIIALYALSNDLNNREDVVKLINNQKKALITVRINNTFKDEPKVGFKNIYDWTFLPTDFETNGSIITSYDGCLGIFGLSISLASKPTGNNHLFILSGTDKYFKLDQFANHMSISRRSHQIRFSESATSYSGYIFRDLSNNNFNLIGTNVENSVSGHVYNALIYYRYNYSFDLKRWIYLHSTGKASIEGGKYYEHAPIELIYACRSAREFAKLQDDVTVLRYSNEIENYINKVYSITYADDPNYFIGVKFKNIPYKYNVKVPHLTFGVLNISEQMLPDVIVILKKFKNELFGMEITTSYTYMLSDEVYVANISGVLSTYFKIYNAFYKEQITFGQSRMFIPHVTLSFSNEKTVRIDNTKLYIDSIYLRKIKGDTVFDMTG</sequence>
<accession>A7J392</accession>
<accession>Q0Q7N4</accession>
<name>VP3_ROTHS</name>
<proteinExistence type="inferred from homology"/>
<reference key="1">
    <citation type="journal article" date="2008" name="J. Virol.">
        <title>Full genome-based classification of rotaviruses reveals a common origin between human Wa-Like and porcine rotavirus strains and human DS-1-like and bovine rotavirus strains.</title>
        <authorList>
            <person name="Matthijnssens J."/>
            <person name="Ciarlet M."/>
            <person name="Heiman E.M."/>
            <person name="Arijs I."/>
            <person name="Delbeke T."/>
            <person name="McDonald S.M."/>
            <person name="Palombo E.A."/>
            <person name="Iturriza-Gomara M."/>
            <person name="Maes P."/>
            <person name="Patton J.T."/>
            <person name="Rahman M."/>
            <person name="Van Ranst M."/>
        </authorList>
    </citation>
    <scope>NUCLEOTIDE SEQUENCE [GENOMIC RNA]</scope>
</reference>
<reference key="2">
    <citation type="journal article" date="2006" name="J. Clin. Microbiol.">
        <title>Molecular epidemiology of G9 rotaviruses in Taiwan between 2000 and 2002.</title>
        <authorList>
            <person name="Lin Y.P."/>
            <person name="Chang S.Y."/>
            <person name="Kao C.L."/>
            <person name="Huang L.M."/>
            <person name="Chung M.Y."/>
            <person name="Yang J.Y."/>
            <person name="Chen H.Y."/>
            <person name="Taniguchi K."/>
            <person name="Tsai K.S."/>
            <person name="Lee C.N."/>
        </authorList>
    </citation>
    <scope>NUCLEOTIDE SEQUENCE [GENOMIC RNA] OF 638-835</scope>
</reference>
<keyword id="KW-0342">GTP-binding</keyword>
<keyword id="KW-0945">Host-virus interaction</keyword>
<keyword id="KW-0378">Hydrolase</keyword>
<keyword id="KW-1090">Inhibition of host innate immune response by virus</keyword>
<keyword id="KW-0489">Methyltransferase</keyword>
<keyword id="KW-0506">mRNA capping</keyword>
<keyword id="KW-0507">mRNA processing</keyword>
<keyword id="KW-0511">Multifunctional enzyme</keyword>
<keyword id="KW-0547">Nucleotide-binding</keyword>
<keyword id="KW-0548">Nucleotidyltransferase</keyword>
<keyword id="KW-0694">RNA-binding</keyword>
<keyword id="KW-0949">S-adenosyl-L-methionine</keyword>
<keyword id="KW-0808">Transferase</keyword>
<keyword id="KW-0899">Viral immunoevasion</keyword>
<keyword id="KW-0946">Virion</keyword>